<organism>
    <name type="scientific">Corynebacterium ammoniagenes</name>
    <name type="common">Brevibacterium ammoniagenes</name>
    <dbReference type="NCBI Taxonomy" id="1697"/>
    <lineage>
        <taxon>Bacteria</taxon>
        <taxon>Bacillati</taxon>
        <taxon>Actinomycetota</taxon>
        <taxon>Actinomycetes</taxon>
        <taxon>Mycobacteriales</taxon>
        <taxon>Corynebacteriaceae</taxon>
        <taxon>Corynebacterium</taxon>
    </lineage>
</organism>
<protein>
    <recommendedName>
        <fullName evidence="1">Bifunctional purine biosynthesis protein PurH</fullName>
    </recommendedName>
    <domain>
        <recommendedName>
            <fullName evidence="1">Phosphoribosylaminoimidazolecarboxamide formyltransferase</fullName>
            <ecNumber evidence="1">2.1.2.3</ecNumber>
        </recommendedName>
        <alternativeName>
            <fullName evidence="1">AICAR transformylase</fullName>
        </alternativeName>
    </domain>
    <domain>
        <recommendedName>
            <fullName evidence="1">IMP cyclohydrolase</fullName>
            <ecNumber evidence="1">3.5.4.10</ecNumber>
        </recommendedName>
        <alternativeName>
            <fullName evidence="1">ATIC</fullName>
        </alternativeName>
        <alternativeName>
            <fullName evidence="1">IMP synthase</fullName>
        </alternativeName>
        <alternativeName>
            <fullName evidence="1">Inosinicase</fullName>
        </alternativeName>
    </domain>
</protein>
<feature type="chain" id="PRO_0000192087" description="Bifunctional purine biosynthesis protein PurH">
    <location>
        <begin position="1"/>
        <end position="516"/>
    </location>
</feature>
<feature type="domain" description="MGS-like" evidence="2">
    <location>
        <begin position="1"/>
        <end position="150"/>
    </location>
</feature>
<proteinExistence type="inferred from homology"/>
<accession>Q9RHX6</accession>
<dbReference type="EC" id="2.1.2.3" evidence="1"/>
<dbReference type="EC" id="3.5.4.10" evidence="1"/>
<dbReference type="EMBL" id="AB003159">
    <property type="protein sequence ID" value="BAA89444.1"/>
    <property type="molecule type" value="Genomic_DNA"/>
</dbReference>
<dbReference type="SMR" id="Q9RHX6"/>
<dbReference type="UniPathway" id="UPA00074">
    <property type="reaction ID" value="UER00133"/>
</dbReference>
<dbReference type="UniPathway" id="UPA00074">
    <property type="reaction ID" value="UER00135"/>
</dbReference>
<dbReference type="GO" id="GO:0005829">
    <property type="term" value="C:cytosol"/>
    <property type="evidence" value="ECO:0007669"/>
    <property type="project" value="TreeGrafter"/>
</dbReference>
<dbReference type="GO" id="GO:0003937">
    <property type="term" value="F:IMP cyclohydrolase activity"/>
    <property type="evidence" value="ECO:0007669"/>
    <property type="project" value="UniProtKB-UniRule"/>
</dbReference>
<dbReference type="GO" id="GO:0004643">
    <property type="term" value="F:phosphoribosylaminoimidazolecarboxamide formyltransferase activity"/>
    <property type="evidence" value="ECO:0007669"/>
    <property type="project" value="UniProtKB-UniRule"/>
</dbReference>
<dbReference type="GO" id="GO:0006189">
    <property type="term" value="P:'de novo' IMP biosynthetic process"/>
    <property type="evidence" value="ECO:0007669"/>
    <property type="project" value="UniProtKB-UniRule"/>
</dbReference>
<dbReference type="CDD" id="cd01421">
    <property type="entry name" value="IMPCH"/>
    <property type="match status" value="1"/>
</dbReference>
<dbReference type="FunFam" id="3.40.140.20:FF:000001">
    <property type="entry name" value="Bifunctional purine biosynthesis protein PurH"/>
    <property type="match status" value="1"/>
</dbReference>
<dbReference type="FunFam" id="3.40.50.1380:FF:000001">
    <property type="entry name" value="Bifunctional purine biosynthesis protein PurH"/>
    <property type="match status" value="1"/>
</dbReference>
<dbReference type="Gene3D" id="3.40.140.20">
    <property type="match status" value="2"/>
</dbReference>
<dbReference type="Gene3D" id="3.40.50.1380">
    <property type="entry name" value="Methylglyoxal synthase-like domain"/>
    <property type="match status" value="1"/>
</dbReference>
<dbReference type="HAMAP" id="MF_00139">
    <property type="entry name" value="PurH"/>
    <property type="match status" value="1"/>
</dbReference>
<dbReference type="InterPro" id="IPR024051">
    <property type="entry name" value="AICAR_Tfase_dup_dom_sf"/>
</dbReference>
<dbReference type="InterPro" id="IPR016193">
    <property type="entry name" value="Cytidine_deaminase-like"/>
</dbReference>
<dbReference type="InterPro" id="IPR011607">
    <property type="entry name" value="MGS-like_dom"/>
</dbReference>
<dbReference type="InterPro" id="IPR036914">
    <property type="entry name" value="MGS-like_dom_sf"/>
</dbReference>
<dbReference type="InterPro" id="IPR002695">
    <property type="entry name" value="PurH-like"/>
</dbReference>
<dbReference type="NCBIfam" id="NF002049">
    <property type="entry name" value="PRK00881.1"/>
    <property type="match status" value="1"/>
</dbReference>
<dbReference type="NCBIfam" id="TIGR00355">
    <property type="entry name" value="purH"/>
    <property type="match status" value="1"/>
</dbReference>
<dbReference type="PANTHER" id="PTHR11692:SF0">
    <property type="entry name" value="BIFUNCTIONAL PURINE BIOSYNTHESIS PROTEIN ATIC"/>
    <property type="match status" value="1"/>
</dbReference>
<dbReference type="PANTHER" id="PTHR11692">
    <property type="entry name" value="BIFUNCTIONAL PURINE BIOSYNTHESIS PROTEIN PURH"/>
    <property type="match status" value="1"/>
</dbReference>
<dbReference type="Pfam" id="PF01808">
    <property type="entry name" value="AICARFT_IMPCHas"/>
    <property type="match status" value="1"/>
</dbReference>
<dbReference type="Pfam" id="PF02142">
    <property type="entry name" value="MGS"/>
    <property type="match status" value="1"/>
</dbReference>
<dbReference type="PIRSF" id="PIRSF000414">
    <property type="entry name" value="AICARFT_IMPCHas"/>
    <property type="match status" value="1"/>
</dbReference>
<dbReference type="SMART" id="SM00798">
    <property type="entry name" value="AICARFT_IMPCHas"/>
    <property type="match status" value="1"/>
</dbReference>
<dbReference type="SMART" id="SM00851">
    <property type="entry name" value="MGS"/>
    <property type="match status" value="1"/>
</dbReference>
<dbReference type="SUPFAM" id="SSF53927">
    <property type="entry name" value="Cytidine deaminase-like"/>
    <property type="match status" value="1"/>
</dbReference>
<dbReference type="SUPFAM" id="SSF52335">
    <property type="entry name" value="Methylglyoxal synthase-like"/>
    <property type="match status" value="1"/>
</dbReference>
<dbReference type="PROSITE" id="PS51855">
    <property type="entry name" value="MGS"/>
    <property type="match status" value="1"/>
</dbReference>
<evidence type="ECO:0000255" key="1">
    <source>
        <dbReference type="HAMAP-Rule" id="MF_00139"/>
    </source>
</evidence>
<evidence type="ECO:0000255" key="2">
    <source>
        <dbReference type="PROSITE-ProRule" id="PRU01202"/>
    </source>
</evidence>
<reference key="1">
    <citation type="submission" date="1997-04" db="EMBL/GenBank/DDBJ databases">
        <title>Corynebacterium ammoniagenes purNH region.</title>
        <authorList>
            <person name="Yonetani Y."/>
            <person name="Teshiba S."/>
        </authorList>
    </citation>
    <scope>NUCLEOTIDE SEQUENCE [GENOMIC DNA]</scope>
    <source>
        <strain>ATCC 6872 / DSM 20305 / IAM 1645 / KCTC 1019 / NCTC 2399</strain>
    </source>
</reference>
<keyword id="KW-0378">Hydrolase</keyword>
<keyword id="KW-0511">Multifunctional enzyme</keyword>
<keyword id="KW-0658">Purine biosynthesis</keyword>
<keyword id="KW-0808">Transferase</keyword>
<name>PUR9_CORAM</name>
<gene>
    <name evidence="1" type="primary">purH</name>
</gene>
<sequence length="516" mass="54757">MSDDRKQIKRALISVYDKTGLEELARTLDSAGVEIVSTGSTAAKIADLGINVTPVESLTGFPECLEGRVKTLHPRVHAGILADTRKPDHLNQLEELEIEPFQLVVVNLYPFKETVASGADFDGCVEQIDIGGPSMVRAAAKNHPSVAVVVDPARYGDIAEAVAQGGFDLAQRRQLAATAFKHTADYDVAVSGWFAQQLADDSVASAELEGDALRYGENPHQQASIVREGTTGVANAKQLHGKEMSYNNYQDADAAWRAAWDHERPCVAIIKHANPCGIAVSDESIAAAHAAAHACDPMSAFGGVIAVNREVTKEMATQVADIFTEVIIAPSYEDGAVEILQGKKNIRILVAEHEVPAVEVKEISGGRLLQEADVYQAEGDKASSWTLAAGEAASEEKLAELEFAWRAVRSVKSNAILLAHEGATVGVGMGQVNRVDSAKLAVDRANTLADSAERARGSVAASDAFFPFADGLQVLIDAGVSAVVQPGGSIRDEEVIAAAEAAGITMYFTGTRHFAH</sequence>
<comment type="catalytic activity">
    <reaction evidence="1">
        <text>(6R)-10-formyltetrahydrofolate + 5-amino-1-(5-phospho-beta-D-ribosyl)imidazole-4-carboxamide = 5-formamido-1-(5-phospho-D-ribosyl)imidazole-4-carboxamide + (6S)-5,6,7,8-tetrahydrofolate</text>
        <dbReference type="Rhea" id="RHEA:22192"/>
        <dbReference type="ChEBI" id="CHEBI:57453"/>
        <dbReference type="ChEBI" id="CHEBI:58467"/>
        <dbReference type="ChEBI" id="CHEBI:58475"/>
        <dbReference type="ChEBI" id="CHEBI:195366"/>
        <dbReference type="EC" id="2.1.2.3"/>
    </reaction>
</comment>
<comment type="catalytic activity">
    <reaction evidence="1">
        <text>IMP + H2O = 5-formamido-1-(5-phospho-D-ribosyl)imidazole-4-carboxamide</text>
        <dbReference type="Rhea" id="RHEA:18445"/>
        <dbReference type="ChEBI" id="CHEBI:15377"/>
        <dbReference type="ChEBI" id="CHEBI:58053"/>
        <dbReference type="ChEBI" id="CHEBI:58467"/>
        <dbReference type="EC" id="3.5.4.10"/>
    </reaction>
</comment>
<comment type="pathway">
    <text evidence="1">Purine metabolism; IMP biosynthesis via de novo pathway; 5-formamido-1-(5-phospho-D-ribosyl)imidazole-4-carboxamide from 5-amino-1-(5-phospho-D-ribosyl)imidazole-4-carboxamide (10-formyl THF route): step 1/1.</text>
</comment>
<comment type="pathway">
    <text evidence="1">Purine metabolism; IMP biosynthesis via de novo pathway; IMP from 5-formamido-1-(5-phospho-D-ribosyl)imidazole-4-carboxamide: step 1/1.</text>
</comment>
<comment type="domain">
    <text evidence="1">The IMP cyclohydrolase activity resides in the N-terminal region.</text>
</comment>
<comment type="similarity">
    <text evidence="1">Belongs to the PurH family.</text>
</comment>